<comment type="function">
    <text>This protein is able to protect a cell, which harbors the plasmid ColE5 encoding colicin E5, against colicin E5.</text>
</comment>
<comment type="sequence caution" evidence="1">
    <conflict type="frameshift">
        <sequence resource="EMBL-CDS" id="AAA98052"/>
    </conflict>
</comment>
<gene>
    <name type="primary">imm</name>
</gene>
<proteinExistence type="evidence at protein level"/>
<evidence type="ECO:0000305" key="1"/>
<evidence type="ECO:0007829" key="2">
    <source>
        <dbReference type="PDB" id="2FHZ"/>
    </source>
</evidence>
<keyword id="KW-0002">3D-structure</keyword>
<keyword id="KW-0079">Bacteriocin immunity</keyword>
<keyword id="KW-0614">Plasmid</keyword>
<geneLocation type="plasmid">
    <name>ColE5-099</name>
</geneLocation>
<protein>
    <recommendedName>
        <fullName>Colicin-E5 immunity protein</fullName>
    </recommendedName>
    <alternativeName>
        <fullName>ImmE5</fullName>
    </alternativeName>
    <alternativeName>
        <fullName>Microcin-E5 immunity protein</fullName>
    </alternativeName>
</protein>
<dbReference type="EMBL" id="X15857">
    <property type="protein sequence ID" value="CAA33860.1"/>
    <property type="molecule type" value="Genomic_DNA"/>
</dbReference>
<dbReference type="EMBL" id="M30445">
    <property type="protein sequence ID" value="AAA98052.1"/>
    <property type="status" value="ALT_FRAME"/>
    <property type="molecule type" value="Genomic_DNA"/>
</dbReference>
<dbReference type="PIR" id="JQ0329">
    <property type="entry name" value="JQ0329"/>
</dbReference>
<dbReference type="PDB" id="2DFX">
    <property type="method" value="X-ray"/>
    <property type="resolution" value="1.90 A"/>
    <property type="chains" value="I=1-83"/>
</dbReference>
<dbReference type="PDB" id="2FHZ">
    <property type="method" value="X-ray"/>
    <property type="resolution" value="1.15 A"/>
    <property type="chains" value="A=1-83"/>
</dbReference>
<dbReference type="PDBsum" id="2DFX"/>
<dbReference type="PDBsum" id="2FHZ"/>
<dbReference type="SMR" id="P13476"/>
<dbReference type="EvolutionaryTrace" id="P13476"/>
<dbReference type="GO" id="GO:0030153">
    <property type="term" value="P:bacteriocin immunity"/>
    <property type="evidence" value="ECO:0007669"/>
    <property type="project" value="UniProtKB-KW"/>
</dbReference>
<dbReference type="Gene3D" id="3.30.190.30">
    <property type="match status" value="1"/>
</dbReference>
<dbReference type="InterPro" id="IPR020127">
    <property type="entry name" value="Colicin-E5_imm"/>
</dbReference>
<dbReference type="InterPro" id="IPR037234">
    <property type="entry name" value="ImmE5_sf"/>
</dbReference>
<dbReference type="Pfam" id="PF11480">
    <property type="entry name" value="ImmE5"/>
    <property type="match status" value="1"/>
</dbReference>
<dbReference type="SUPFAM" id="SSF143469">
    <property type="entry name" value="ImmE5-like"/>
    <property type="match status" value="1"/>
</dbReference>
<feature type="chain" id="PRO_0000218705" description="Colicin-E5 immunity protein">
    <location>
        <begin position="1"/>
        <end position="83"/>
    </location>
</feature>
<feature type="helix" evidence="2">
    <location>
        <begin position="5"/>
        <end position="18"/>
    </location>
</feature>
<feature type="strand" evidence="2">
    <location>
        <begin position="22"/>
        <end position="30"/>
    </location>
</feature>
<feature type="strand" evidence="2">
    <location>
        <begin position="35"/>
        <end position="37"/>
    </location>
</feature>
<feature type="helix" evidence="2">
    <location>
        <begin position="39"/>
        <end position="41"/>
    </location>
</feature>
<feature type="helix" evidence="2">
    <location>
        <begin position="52"/>
        <end position="54"/>
    </location>
</feature>
<feature type="helix" evidence="2">
    <location>
        <begin position="55"/>
        <end position="71"/>
    </location>
</feature>
<feature type="strand" evidence="2">
    <location>
        <begin position="76"/>
        <end position="81"/>
    </location>
</feature>
<reference key="1">
    <citation type="journal article" date="1989" name="Mol. Gen. Genet.">
        <title>Nucleotide sequences from the colicin E5, E6 and E9 operons: presence of a degenerate transposon-like structure in the ColE9-J plasmid.</title>
        <authorList>
            <person name="Lau P.C.K."/>
            <person name="Condie J.A."/>
        </authorList>
    </citation>
    <scope>NUCLEOTIDE SEQUENCE [GENOMIC DNA]</scope>
</reference>
<reference key="2">
    <citation type="journal article" date="1989" name="J. Gen. Microbiol.">
        <title>An evolutionary relationship between the ColE5-099 and the ColE9-J plasmids revealed by nucleotide sequencing.</title>
        <authorList>
            <person name="Curtis M.D."/>
            <person name="James R."/>
            <person name="Coddington A."/>
        </authorList>
    </citation>
    <scope>NUCLEOTIDE SEQUENCE [GENOMIC DNA]</scope>
</reference>
<organism>
    <name type="scientific">Escherichia coli</name>
    <dbReference type="NCBI Taxonomy" id="562"/>
    <lineage>
        <taxon>Bacteria</taxon>
        <taxon>Pseudomonadati</taxon>
        <taxon>Pseudomonadota</taxon>
        <taxon>Gammaproteobacteria</taxon>
        <taxon>Enterobacterales</taxon>
        <taxon>Enterobacteriaceae</taxon>
        <taxon>Escherichia</taxon>
    </lineage>
</organism>
<name>IMM5_ECOLX</name>
<accession>P13476</accession>
<accession>P18001</accession>
<sequence>MKLSPKAAIEVCNEAAKKGLWILGIDGGHWLNPGFRIDSSASWTYDMPEEYKSKIPENNRLAIENIKDDIENGYTAFIITLKM</sequence>